<dbReference type="EMBL" id="CP000890">
    <property type="protein sequence ID" value="ABX78646.1"/>
    <property type="molecule type" value="Genomic_DNA"/>
</dbReference>
<dbReference type="RefSeq" id="WP_005770421.1">
    <property type="nucleotide sequence ID" value="NC_010117.1"/>
</dbReference>
<dbReference type="SMR" id="A9NAB1"/>
<dbReference type="KEGG" id="cbs:COXBURSA331_A1941"/>
<dbReference type="HOGENOM" id="CLU_082184_2_2_6"/>
<dbReference type="GO" id="GO:0022625">
    <property type="term" value="C:cytosolic large ribosomal subunit"/>
    <property type="evidence" value="ECO:0007669"/>
    <property type="project" value="TreeGrafter"/>
</dbReference>
<dbReference type="GO" id="GO:0003729">
    <property type="term" value="F:mRNA binding"/>
    <property type="evidence" value="ECO:0007669"/>
    <property type="project" value="TreeGrafter"/>
</dbReference>
<dbReference type="GO" id="GO:0003735">
    <property type="term" value="F:structural constituent of ribosome"/>
    <property type="evidence" value="ECO:0007669"/>
    <property type="project" value="InterPro"/>
</dbReference>
<dbReference type="GO" id="GO:0017148">
    <property type="term" value="P:negative regulation of translation"/>
    <property type="evidence" value="ECO:0007669"/>
    <property type="project" value="TreeGrafter"/>
</dbReference>
<dbReference type="GO" id="GO:0006412">
    <property type="term" value="P:translation"/>
    <property type="evidence" value="ECO:0007669"/>
    <property type="project" value="UniProtKB-UniRule"/>
</dbReference>
<dbReference type="CDD" id="cd00392">
    <property type="entry name" value="Ribosomal_L13"/>
    <property type="match status" value="1"/>
</dbReference>
<dbReference type="FunFam" id="3.90.1180.10:FF:000001">
    <property type="entry name" value="50S ribosomal protein L13"/>
    <property type="match status" value="1"/>
</dbReference>
<dbReference type="Gene3D" id="3.90.1180.10">
    <property type="entry name" value="Ribosomal protein L13"/>
    <property type="match status" value="1"/>
</dbReference>
<dbReference type="HAMAP" id="MF_01366">
    <property type="entry name" value="Ribosomal_uL13"/>
    <property type="match status" value="1"/>
</dbReference>
<dbReference type="InterPro" id="IPR005822">
    <property type="entry name" value="Ribosomal_uL13"/>
</dbReference>
<dbReference type="InterPro" id="IPR005823">
    <property type="entry name" value="Ribosomal_uL13_bac-type"/>
</dbReference>
<dbReference type="InterPro" id="IPR023563">
    <property type="entry name" value="Ribosomal_uL13_CS"/>
</dbReference>
<dbReference type="InterPro" id="IPR036899">
    <property type="entry name" value="Ribosomal_uL13_sf"/>
</dbReference>
<dbReference type="NCBIfam" id="TIGR01066">
    <property type="entry name" value="rplM_bact"/>
    <property type="match status" value="1"/>
</dbReference>
<dbReference type="PANTHER" id="PTHR11545:SF2">
    <property type="entry name" value="LARGE RIBOSOMAL SUBUNIT PROTEIN UL13M"/>
    <property type="match status" value="1"/>
</dbReference>
<dbReference type="PANTHER" id="PTHR11545">
    <property type="entry name" value="RIBOSOMAL PROTEIN L13"/>
    <property type="match status" value="1"/>
</dbReference>
<dbReference type="Pfam" id="PF00572">
    <property type="entry name" value="Ribosomal_L13"/>
    <property type="match status" value="1"/>
</dbReference>
<dbReference type="PIRSF" id="PIRSF002181">
    <property type="entry name" value="Ribosomal_L13"/>
    <property type="match status" value="1"/>
</dbReference>
<dbReference type="SUPFAM" id="SSF52161">
    <property type="entry name" value="Ribosomal protein L13"/>
    <property type="match status" value="1"/>
</dbReference>
<dbReference type="PROSITE" id="PS00783">
    <property type="entry name" value="RIBOSOMAL_L13"/>
    <property type="match status" value="1"/>
</dbReference>
<keyword id="KW-0687">Ribonucleoprotein</keyword>
<keyword id="KW-0689">Ribosomal protein</keyword>
<gene>
    <name evidence="1" type="primary">rplM</name>
    <name type="ordered locus">COXBURSA331_A1941</name>
</gene>
<sequence length="142" mass="15811">MATYMANAKTVSPRWLLVNAEGKTLGRLASRIAAILRGKHKAEFTPHVDAGDFVVVINVDKLKVTGNKTQDKQYHHHSGYPGGLKTINFADLQAKKPQRILELAIKGMLPKGPLGRQLYRKLKIYAGDQHPHQAQQPELIDL</sequence>
<reference key="1">
    <citation type="submission" date="2007-11" db="EMBL/GenBank/DDBJ databases">
        <title>Genome sequencing of phylogenetically and phenotypically diverse Coxiella burnetii isolates.</title>
        <authorList>
            <person name="Seshadri R."/>
            <person name="Samuel J.E."/>
        </authorList>
    </citation>
    <scope>NUCLEOTIDE SEQUENCE [LARGE SCALE GENOMIC DNA]</scope>
    <source>
        <strain>RSA 331 / Henzerling II</strain>
    </source>
</reference>
<evidence type="ECO:0000255" key="1">
    <source>
        <dbReference type="HAMAP-Rule" id="MF_01366"/>
    </source>
</evidence>
<evidence type="ECO:0000305" key="2"/>
<name>RL13_COXBR</name>
<protein>
    <recommendedName>
        <fullName evidence="1">Large ribosomal subunit protein uL13</fullName>
    </recommendedName>
    <alternativeName>
        <fullName evidence="2">50S ribosomal protein L13</fullName>
    </alternativeName>
</protein>
<comment type="function">
    <text evidence="1">This protein is one of the early assembly proteins of the 50S ribosomal subunit, although it is not seen to bind rRNA by itself. It is important during the early stages of 50S assembly.</text>
</comment>
<comment type="subunit">
    <text evidence="1">Part of the 50S ribosomal subunit.</text>
</comment>
<comment type="similarity">
    <text evidence="1">Belongs to the universal ribosomal protein uL13 family.</text>
</comment>
<accession>A9NAB1</accession>
<organism>
    <name type="scientific">Coxiella burnetii (strain RSA 331 / Henzerling II)</name>
    <dbReference type="NCBI Taxonomy" id="360115"/>
    <lineage>
        <taxon>Bacteria</taxon>
        <taxon>Pseudomonadati</taxon>
        <taxon>Pseudomonadota</taxon>
        <taxon>Gammaproteobacteria</taxon>
        <taxon>Legionellales</taxon>
        <taxon>Coxiellaceae</taxon>
        <taxon>Coxiella</taxon>
    </lineage>
</organism>
<proteinExistence type="inferred from homology"/>
<feature type="chain" id="PRO_1000087084" description="Large ribosomal subunit protein uL13">
    <location>
        <begin position="1"/>
        <end position="142"/>
    </location>
</feature>